<proteinExistence type="inferred from homology"/>
<organism>
    <name type="scientific">Shewanella putrefaciens (strain CN-32 / ATCC BAA-453)</name>
    <dbReference type="NCBI Taxonomy" id="319224"/>
    <lineage>
        <taxon>Bacteria</taxon>
        <taxon>Pseudomonadati</taxon>
        <taxon>Pseudomonadota</taxon>
        <taxon>Gammaproteobacteria</taxon>
        <taxon>Alteromonadales</taxon>
        <taxon>Shewanellaceae</taxon>
        <taxon>Shewanella</taxon>
    </lineage>
</organism>
<protein>
    <recommendedName>
        <fullName evidence="1">Glucans biosynthesis protein G</fullName>
    </recommendedName>
</protein>
<feature type="signal peptide" evidence="1">
    <location>
        <begin position="1"/>
        <end position="34"/>
    </location>
</feature>
<feature type="chain" id="PRO_5000241544" description="Glucans biosynthesis protein G">
    <location>
        <begin position="35"/>
        <end position="544"/>
    </location>
</feature>
<evidence type="ECO:0000255" key="1">
    <source>
        <dbReference type="HAMAP-Rule" id="MF_01069"/>
    </source>
</evidence>
<dbReference type="EMBL" id="CP000681">
    <property type="protein sequence ID" value="ABP75802.1"/>
    <property type="molecule type" value="Genomic_DNA"/>
</dbReference>
<dbReference type="SMR" id="A4Y769"/>
<dbReference type="STRING" id="319224.Sputcn32_2081"/>
<dbReference type="KEGG" id="spc:Sputcn32_2081"/>
<dbReference type="eggNOG" id="COG3131">
    <property type="taxonomic scope" value="Bacteria"/>
</dbReference>
<dbReference type="HOGENOM" id="CLU_023403_2_0_6"/>
<dbReference type="UniPathway" id="UPA00637"/>
<dbReference type="GO" id="GO:0030288">
    <property type="term" value="C:outer membrane-bounded periplasmic space"/>
    <property type="evidence" value="ECO:0007669"/>
    <property type="project" value="TreeGrafter"/>
</dbReference>
<dbReference type="GO" id="GO:0030246">
    <property type="term" value="F:carbohydrate binding"/>
    <property type="evidence" value="ECO:0007669"/>
    <property type="project" value="InterPro"/>
</dbReference>
<dbReference type="GO" id="GO:0003824">
    <property type="term" value="F:catalytic activity"/>
    <property type="evidence" value="ECO:0007669"/>
    <property type="project" value="InterPro"/>
</dbReference>
<dbReference type="GO" id="GO:0051274">
    <property type="term" value="P:beta-glucan biosynthetic process"/>
    <property type="evidence" value="ECO:0007669"/>
    <property type="project" value="TreeGrafter"/>
</dbReference>
<dbReference type="FunFam" id="2.60.40.10:FF:001915">
    <property type="entry name" value="Glucans biosynthesis protein G"/>
    <property type="match status" value="1"/>
</dbReference>
<dbReference type="FunFam" id="2.70.98.10:FF:000001">
    <property type="entry name" value="Glucans biosynthesis protein G"/>
    <property type="match status" value="1"/>
</dbReference>
<dbReference type="Gene3D" id="2.70.98.10">
    <property type="match status" value="1"/>
</dbReference>
<dbReference type="Gene3D" id="2.60.40.10">
    <property type="entry name" value="Immunoglobulins"/>
    <property type="match status" value="1"/>
</dbReference>
<dbReference type="HAMAP" id="MF_01069">
    <property type="entry name" value="MdoG_OpgG"/>
    <property type="match status" value="1"/>
</dbReference>
<dbReference type="InterPro" id="IPR011013">
    <property type="entry name" value="Gal_mutarotase_sf_dom"/>
</dbReference>
<dbReference type="InterPro" id="IPR014718">
    <property type="entry name" value="GH-type_carb-bd"/>
</dbReference>
<dbReference type="InterPro" id="IPR014438">
    <property type="entry name" value="Glucan_biosyn_MdoG/MdoD"/>
</dbReference>
<dbReference type="InterPro" id="IPR007444">
    <property type="entry name" value="Glucan_biosyn_MdoG_C"/>
</dbReference>
<dbReference type="InterPro" id="IPR013783">
    <property type="entry name" value="Ig-like_fold"/>
</dbReference>
<dbReference type="InterPro" id="IPR014756">
    <property type="entry name" value="Ig_E-set"/>
</dbReference>
<dbReference type="InterPro" id="IPR023704">
    <property type="entry name" value="MdoG_OpgG"/>
</dbReference>
<dbReference type="PANTHER" id="PTHR30504">
    <property type="entry name" value="GLUCANS BIOSYNTHESIS PROTEIN"/>
    <property type="match status" value="1"/>
</dbReference>
<dbReference type="PANTHER" id="PTHR30504:SF2">
    <property type="entry name" value="GLUCANS BIOSYNTHESIS PROTEIN G"/>
    <property type="match status" value="1"/>
</dbReference>
<dbReference type="Pfam" id="PF04349">
    <property type="entry name" value="MdoG"/>
    <property type="match status" value="1"/>
</dbReference>
<dbReference type="PIRSF" id="PIRSF006281">
    <property type="entry name" value="MdoG"/>
    <property type="match status" value="1"/>
</dbReference>
<dbReference type="SUPFAM" id="SSF81296">
    <property type="entry name" value="E set domains"/>
    <property type="match status" value="1"/>
</dbReference>
<dbReference type="SUPFAM" id="SSF74650">
    <property type="entry name" value="Galactose mutarotase-like"/>
    <property type="match status" value="1"/>
</dbReference>
<accession>A4Y769</accession>
<keyword id="KW-0574">Periplasm</keyword>
<keyword id="KW-0732">Signal</keyword>
<comment type="function">
    <text evidence="1">Involved in the biosynthesis of osmoregulated periplasmic glucans (OPGs).</text>
</comment>
<comment type="pathway">
    <text evidence="1">Glycan metabolism; osmoregulated periplasmic glucan (OPG) biosynthesis.</text>
</comment>
<comment type="subcellular location">
    <subcellularLocation>
        <location evidence="1">Periplasm</location>
    </subcellularLocation>
</comment>
<comment type="similarity">
    <text evidence="1">Belongs to the OpgD/OpgG family.</text>
</comment>
<name>OPGG_SHEPC</name>
<reference key="1">
    <citation type="submission" date="2007-04" db="EMBL/GenBank/DDBJ databases">
        <title>Complete sequence of Shewanella putrefaciens CN-32.</title>
        <authorList>
            <consortium name="US DOE Joint Genome Institute"/>
            <person name="Copeland A."/>
            <person name="Lucas S."/>
            <person name="Lapidus A."/>
            <person name="Barry K."/>
            <person name="Detter J.C."/>
            <person name="Glavina del Rio T."/>
            <person name="Hammon N."/>
            <person name="Israni S."/>
            <person name="Dalin E."/>
            <person name="Tice H."/>
            <person name="Pitluck S."/>
            <person name="Chain P."/>
            <person name="Malfatti S."/>
            <person name="Shin M."/>
            <person name="Vergez L."/>
            <person name="Schmutz J."/>
            <person name="Larimer F."/>
            <person name="Land M."/>
            <person name="Hauser L."/>
            <person name="Kyrpides N."/>
            <person name="Mikhailova N."/>
            <person name="Romine M.F."/>
            <person name="Fredrickson J."/>
            <person name="Tiedje J."/>
            <person name="Richardson P."/>
        </authorList>
    </citation>
    <scope>NUCLEOTIDE SEQUENCE [LARGE SCALE GENOMIC DNA]</scope>
    <source>
        <strain>CN-32 / ATCC BAA-453</strain>
    </source>
</reference>
<sequence>MVSLLRCQSSKPYSSLICSLALGVAFALSGTAYAEETKPTETVPAPVVTPPKVTPPPATKNQVRFTKTGAFDSDYVVKLARKLAAKPYSVLKDPLPVGLAKLTYDEYRDIRFNPTASIWRDQGLPFQMQMFHRGFYFQDLIEIAIVEGNKATHLAYEPKYFTAGEVITQALPNDDIGYSGFRIHNQLNNNGVFDELMVFQGASYFRALGKGNAYGLSARGLALKTADPEGEEFPIFRAFWVERPHYDSNLIVVHALLDSPSVAGAYRFSVRPGDNTQIDVEATLFPRVELSKVGLAPSTSMFLHSLNGRHDTDDFRPEVHDSDGLLMFNGRGEHLWRPLANPRQLQVSAFSDNSPQGFGLIQRERSYAAYQDLEAQYERRPSLWIEPVGNWGQGAVVLTEIPTESEIHDNIVSFWKPRQPIPAGSEYHFAYRMSWGEEPAVKHNYVVVSRTASGRADIAKPTPRRLFVVDYQVNGAMPEELPLAKVEASGGIISNVVIAPNAANNGYRLAFELEPEGKELIELRAELKFPTPRQVETWLYRWTL</sequence>
<gene>
    <name evidence="1" type="primary">opgG</name>
    <name type="ordered locus">Sputcn32_2081</name>
</gene>